<feature type="chain" id="PRO_0000323128" description="Small ribosomal subunit protein uS5">
    <location>
        <begin position="1"/>
        <end position="166"/>
    </location>
</feature>
<feature type="domain" description="S5 DRBM" evidence="1">
    <location>
        <begin position="11"/>
        <end position="74"/>
    </location>
</feature>
<proteinExistence type="inferred from homology"/>
<dbReference type="EMBL" id="AM286280">
    <property type="protein sequence ID" value="CAL08358.1"/>
    <property type="molecule type" value="Genomic_DNA"/>
</dbReference>
<dbReference type="RefSeq" id="WP_003021588.1">
    <property type="nucleotide sequence ID" value="NC_008245.1"/>
</dbReference>
<dbReference type="SMR" id="Q14JA3"/>
<dbReference type="GeneID" id="75264244"/>
<dbReference type="KEGG" id="ftf:FTF0342"/>
<dbReference type="HOGENOM" id="CLU_065898_2_2_6"/>
<dbReference type="GO" id="GO:0015935">
    <property type="term" value="C:small ribosomal subunit"/>
    <property type="evidence" value="ECO:0007669"/>
    <property type="project" value="InterPro"/>
</dbReference>
<dbReference type="GO" id="GO:0019843">
    <property type="term" value="F:rRNA binding"/>
    <property type="evidence" value="ECO:0007669"/>
    <property type="project" value="UniProtKB-UniRule"/>
</dbReference>
<dbReference type="GO" id="GO:0003735">
    <property type="term" value="F:structural constituent of ribosome"/>
    <property type="evidence" value="ECO:0007669"/>
    <property type="project" value="InterPro"/>
</dbReference>
<dbReference type="GO" id="GO:0006412">
    <property type="term" value="P:translation"/>
    <property type="evidence" value="ECO:0007669"/>
    <property type="project" value="UniProtKB-UniRule"/>
</dbReference>
<dbReference type="FunFam" id="3.30.160.20:FF:000001">
    <property type="entry name" value="30S ribosomal protein S5"/>
    <property type="match status" value="1"/>
</dbReference>
<dbReference type="FunFam" id="3.30.230.10:FF:000002">
    <property type="entry name" value="30S ribosomal protein S5"/>
    <property type="match status" value="1"/>
</dbReference>
<dbReference type="Gene3D" id="3.30.160.20">
    <property type="match status" value="1"/>
</dbReference>
<dbReference type="Gene3D" id="3.30.230.10">
    <property type="match status" value="1"/>
</dbReference>
<dbReference type="HAMAP" id="MF_01307_B">
    <property type="entry name" value="Ribosomal_uS5_B"/>
    <property type="match status" value="1"/>
</dbReference>
<dbReference type="InterPro" id="IPR020568">
    <property type="entry name" value="Ribosomal_Su5_D2-typ_SF"/>
</dbReference>
<dbReference type="InterPro" id="IPR000851">
    <property type="entry name" value="Ribosomal_uS5"/>
</dbReference>
<dbReference type="InterPro" id="IPR005712">
    <property type="entry name" value="Ribosomal_uS5_bac-type"/>
</dbReference>
<dbReference type="InterPro" id="IPR005324">
    <property type="entry name" value="Ribosomal_uS5_C"/>
</dbReference>
<dbReference type="InterPro" id="IPR013810">
    <property type="entry name" value="Ribosomal_uS5_N"/>
</dbReference>
<dbReference type="InterPro" id="IPR018192">
    <property type="entry name" value="Ribosomal_uS5_N_CS"/>
</dbReference>
<dbReference type="InterPro" id="IPR014721">
    <property type="entry name" value="Ribsml_uS5_D2-typ_fold_subgr"/>
</dbReference>
<dbReference type="NCBIfam" id="TIGR01021">
    <property type="entry name" value="rpsE_bact"/>
    <property type="match status" value="1"/>
</dbReference>
<dbReference type="PANTHER" id="PTHR48277">
    <property type="entry name" value="MITOCHONDRIAL RIBOSOMAL PROTEIN S5"/>
    <property type="match status" value="1"/>
</dbReference>
<dbReference type="PANTHER" id="PTHR48277:SF1">
    <property type="entry name" value="MITOCHONDRIAL RIBOSOMAL PROTEIN S5"/>
    <property type="match status" value="1"/>
</dbReference>
<dbReference type="Pfam" id="PF00333">
    <property type="entry name" value="Ribosomal_S5"/>
    <property type="match status" value="1"/>
</dbReference>
<dbReference type="Pfam" id="PF03719">
    <property type="entry name" value="Ribosomal_S5_C"/>
    <property type="match status" value="1"/>
</dbReference>
<dbReference type="SUPFAM" id="SSF54768">
    <property type="entry name" value="dsRNA-binding domain-like"/>
    <property type="match status" value="1"/>
</dbReference>
<dbReference type="SUPFAM" id="SSF54211">
    <property type="entry name" value="Ribosomal protein S5 domain 2-like"/>
    <property type="match status" value="1"/>
</dbReference>
<dbReference type="PROSITE" id="PS00585">
    <property type="entry name" value="RIBOSOMAL_S5"/>
    <property type="match status" value="1"/>
</dbReference>
<dbReference type="PROSITE" id="PS50881">
    <property type="entry name" value="S5_DSRBD"/>
    <property type="match status" value="1"/>
</dbReference>
<accession>Q14JA3</accession>
<comment type="function">
    <text evidence="1">With S4 and S12 plays an important role in translational accuracy.</text>
</comment>
<comment type="function">
    <text evidence="1">Located at the back of the 30S subunit body where it stabilizes the conformation of the head with respect to the body.</text>
</comment>
<comment type="subunit">
    <text evidence="1">Part of the 30S ribosomal subunit. Contacts proteins S4 and S8.</text>
</comment>
<comment type="domain">
    <text>The N-terminal domain interacts with the head of the 30S subunit; the C-terminal domain interacts with the body and contacts protein S4. The interaction surface between S4 and S5 is involved in control of translational fidelity.</text>
</comment>
<comment type="similarity">
    <text evidence="1">Belongs to the universal ribosomal protein uS5 family.</text>
</comment>
<sequence>MSNEVKKNEELIEKLVSVKRHSKTVKGGRIMSFAALTVVGDGKGRIGVGRGKSREVPAAIQKAMENAKKNMVSVNLNNDTLWYPVMSNHGASKVFMQPASAGTGIIAGGAMRSVFEAVGVHNVLAKTYGSTNPANVVRATIAGLAKIKSPDEIAEKRGLSVEEIQG</sequence>
<evidence type="ECO:0000255" key="1">
    <source>
        <dbReference type="HAMAP-Rule" id="MF_01307"/>
    </source>
</evidence>
<evidence type="ECO:0000305" key="2"/>
<organism>
    <name type="scientific">Francisella tularensis subsp. tularensis (strain FSC 198)</name>
    <dbReference type="NCBI Taxonomy" id="393115"/>
    <lineage>
        <taxon>Bacteria</taxon>
        <taxon>Pseudomonadati</taxon>
        <taxon>Pseudomonadota</taxon>
        <taxon>Gammaproteobacteria</taxon>
        <taxon>Thiotrichales</taxon>
        <taxon>Francisellaceae</taxon>
        <taxon>Francisella</taxon>
    </lineage>
</organism>
<reference key="1">
    <citation type="journal article" date="2007" name="PLoS ONE">
        <title>Genome sequencing shows that European isolates of Francisella tularensis subspecies tularensis are almost identical to US laboratory strain Schu S4.</title>
        <authorList>
            <person name="Chaudhuri R.R."/>
            <person name="Ren C.-P."/>
            <person name="Desmond L."/>
            <person name="Vincent G.A."/>
            <person name="Silman N.J."/>
            <person name="Brehm J.K."/>
            <person name="Elmore M.J."/>
            <person name="Hudson M.J."/>
            <person name="Forsman M."/>
            <person name="Isherwood K.E."/>
            <person name="Gurycova D."/>
            <person name="Minton N.P."/>
            <person name="Titball R.W."/>
            <person name="Pallen M.J."/>
            <person name="Vipond R."/>
        </authorList>
    </citation>
    <scope>NUCLEOTIDE SEQUENCE [LARGE SCALE GENOMIC DNA]</scope>
    <source>
        <strain>FSC 198</strain>
    </source>
</reference>
<gene>
    <name evidence="1" type="primary">rpsE</name>
    <name type="ordered locus">FTF0342</name>
</gene>
<name>RS5_FRAT1</name>
<protein>
    <recommendedName>
        <fullName evidence="1">Small ribosomal subunit protein uS5</fullName>
    </recommendedName>
    <alternativeName>
        <fullName evidence="2">30S ribosomal protein S5</fullName>
    </alternativeName>
</protein>
<keyword id="KW-0687">Ribonucleoprotein</keyword>
<keyword id="KW-0689">Ribosomal protein</keyword>
<keyword id="KW-0694">RNA-binding</keyword>
<keyword id="KW-0699">rRNA-binding</keyword>